<proteinExistence type="inferred from homology"/>
<organism>
    <name type="scientific">Burkholderia mallei (strain ATCC 23344)</name>
    <dbReference type="NCBI Taxonomy" id="243160"/>
    <lineage>
        <taxon>Bacteria</taxon>
        <taxon>Pseudomonadati</taxon>
        <taxon>Pseudomonadota</taxon>
        <taxon>Betaproteobacteria</taxon>
        <taxon>Burkholderiales</taxon>
        <taxon>Burkholderiaceae</taxon>
        <taxon>Burkholderia</taxon>
        <taxon>pseudomallei group</taxon>
    </lineage>
</organism>
<keyword id="KW-0004">4Fe-4S</keyword>
<keyword id="KW-0408">Iron</keyword>
<keyword id="KW-0411">Iron-sulfur</keyword>
<keyword id="KW-0479">Metal-binding</keyword>
<keyword id="KW-0489">Methyltransferase</keyword>
<keyword id="KW-1185">Reference proteome</keyword>
<keyword id="KW-0698">rRNA processing</keyword>
<keyword id="KW-0949">S-adenosyl-L-methionine</keyword>
<keyword id="KW-0808">Transferase</keyword>
<dbReference type="EC" id="2.1.1.190" evidence="1"/>
<dbReference type="EMBL" id="CP000010">
    <property type="protein sequence ID" value="AAU47571.1"/>
    <property type="molecule type" value="Genomic_DNA"/>
</dbReference>
<dbReference type="RefSeq" id="WP_004192701.1">
    <property type="nucleotide sequence ID" value="NC_006348.1"/>
</dbReference>
<dbReference type="RefSeq" id="YP_103010.1">
    <property type="nucleotide sequence ID" value="NC_006348.1"/>
</dbReference>
<dbReference type="SMR" id="Q62JV9"/>
<dbReference type="GeneID" id="93060481"/>
<dbReference type="KEGG" id="bma:BMA1350"/>
<dbReference type="PATRIC" id="fig|243160.12.peg.1389"/>
<dbReference type="eggNOG" id="COG2265">
    <property type="taxonomic scope" value="Bacteria"/>
</dbReference>
<dbReference type="HOGENOM" id="CLU_014689_8_2_4"/>
<dbReference type="Proteomes" id="UP000006693">
    <property type="component" value="Chromosome 1"/>
</dbReference>
<dbReference type="GO" id="GO:0051539">
    <property type="term" value="F:4 iron, 4 sulfur cluster binding"/>
    <property type="evidence" value="ECO:0007669"/>
    <property type="project" value="UniProtKB-KW"/>
</dbReference>
<dbReference type="GO" id="GO:0005506">
    <property type="term" value="F:iron ion binding"/>
    <property type="evidence" value="ECO:0007669"/>
    <property type="project" value="UniProtKB-UniRule"/>
</dbReference>
<dbReference type="GO" id="GO:0003723">
    <property type="term" value="F:RNA binding"/>
    <property type="evidence" value="ECO:0007669"/>
    <property type="project" value="InterPro"/>
</dbReference>
<dbReference type="GO" id="GO:0070041">
    <property type="term" value="F:rRNA (uridine-C5-)-methyltransferase activity"/>
    <property type="evidence" value="ECO:0007669"/>
    <property type="project" value="UniProtKB-UniRule"/>
</dbReference>
<dbReference type="GO" id="GO:0070475">
    <property type="term" value="P:rRNA base methylation"/>
    <property type="evidence" value="ECO:0007669"/>
    <property type="project" value="TreeGrafter"/>
</dbReference>
<dbReference type="CDD" id="cd02440">
    <property type="entry name" value="AdoMet_MTases"/>
    <property type="match status" value="1"/>
</dbReference>
<dbReference type="Gene3D" id="2.40.50.1070">
    <property type="match status" value="1"/>
</dbReference>
<dbReference type="Gene3D" id="2.40.50.140">
    <property type="entry name" value="Nucleic acid-binding proteins"/>
    <property type="match status" value="1"/>
</dbReference>
<dbReference type="Gene3D" id="3.40.50.150">
    <property type="entry name" value="Vaccinia Virus protein VP39"/>
    <property type="match status" value="1"/>
</dbReference>
<dbReference type="HAMAP" id="MF_01010">
    <property type="entry name" value="23SrRNA_methyltr_RlmD"/>
    <property type="match status" value="1"/>
</dbReference>
<dbReference type="InterPro" id="IPR001566">
    <property type="entry name" value="23S_rRNA_MeTrfase_RlmD"/>
</dbReference>
<dbReference type="InterPro" id="IPR030391">
    <property type="entry name" value="MeTrfase_TrmA_CS"/>
</dbReference>
<dbReference type="InterPro" id="IPR012340">
    <property type="entry name" value="NA-bd_OB-fold"/>
</dbReference>
<dbReference type="InterPro" id="IPR029063">
    <property type="entry name" value="SAM-dependent_MTases_sf"/>
</dbReference>
<dbReference type="InterPro" id="IPR002792">
    <property type="entry name" value="TRAM_dom"/>
</dbReference>
<dbReference type="InterPro" id="IPR010280">
    <property type="entry name" value="U5_MeTrfase_fam"/>
</dbReference>
<dbReference type="NCBIfam" id="NF009639">
    <property type="entry name" value="PRK13168.1"/>
    <property type="match status" value="1"/>
</dbReference>
<dbReference type="PANTHER" id="PTHR11061:SF49">
    <property type="entry name" value="23S RRNA (URACIL(1939)-C(5))-METHYLTRANSFERASE RLMD"/>
    <property type="match status" value="1"/>
</dbReference>
<dbReference type="PANTHER" id="PTHR11061">
    <property type="entry name" value="RNA M5U METHYLTRANSFERASE"/>
    <property type="match status" value="1"/>
</dbReference>
<dbReference type="Pfam" id="PF05958">
    <property type="entry name" value="tRNA_U5-meth_tr"/>
    <property type="match status" value="1"/>
</dbReference>
<dbReference type="SUPFAM" id="SSF50249">
    <property type="entry name" value="Nucleic acid-binding proteins"/>
    <property type="match status" value="1"/>
</dbReference>
<dbReference type="SUPFAM" id="SSF53335">
    <property type="entry name" value="S-adenosyl-L-methionine-dependent methyltransferases"/>
    <property type="match status" value="1"/>
</dbReference>
<dbReference type="PROSITE" id="PS51687">
    <property type="entry name" value="SAM_MT_RNA_M5U"/>
    <property type="match status" value="1"/>
</dbReference>
<dbReference type="PROSITE" id="PS50926">
    <property type="entry name" value="TRAM"/>
    <property type="match status" value="1"/>
</dbReference>
<dbReference type="PROSITE" id="PS01231">
    <property type="entry name" value="TRMA_2"/>
    <property type="match status" value="1"/>
</dbReference>
<accession>Q62JV9</accession>
<name>RLMD_BURMA</name>
<reference key="1">
    <citation type="journal article" date="2004" name="Proc. Natl. Acad. Sci. U.S.A.">
        <title>Structural flexibility in the Burkholderia mallei genome.</title>
        <authorList>
            <person name="Nierman W.C."/>
            <person name="DeShazer D."/>
            <person name="Kim H.S."/>
            <person name="Tettelin H."/>
            <person name="Nelson K.E."/>
            <person name="Feldblyum T.V."/>
            <person name="Ulrich R.L."/>
            <person name="Ronning C.M."/>
            <person name="Brinkac L.M."/>
            <person name="Daugherty S.C."/>
            <person name="Davidsen T.D."/>
            <person name="DeBoy R.T."/>
            <person name="Dimitrov G."/>
            <person name="Dodson R.J."/>
            <person name="Durkin A.S."/>
            <person name="Gwinn M.L."/>
            <person name="Haft D.H."/>
            <person name="Khouri H.M."/>
            <person name="Kolonay J.F."/>
            <person name="Madupu R."/>
            <person name="Mohammoud Y."/>
            <person name="Nelson W.C."/>
            <person name="Radune D."/>
            <person name="Romero C.M."/>
            <person name="Sarria S."/>
            <person name="Selengut J."/>
            <person name="Shamblin C."/>
            <person name="Sullivan S.A."/>
            <person name="White O."/>
            <person name="Yu Y."/>
            <person name="Zafar N."/>
            <person name="Zhou L."/>
            <person name="Fraser C.M."/>
        </authorList>
    </citation>
    <scope>NUCLEOTIDE SEQUENCE [LARGE SCALE GENOMIC DNA]</scope>
    <source>
        <strain>ATCC 23344</strain>
    </source>
</reference>
<feature type="chain" id="PRO_0000161890" description="23S rRNA (uracil(1939)-C(5))-methyltransferase RlmD">
    <location>
        <begin position="1"/>
        <end position="465"/>
    </location>
</feature>
<feature type="domain" description="TRAM" evidence="1">
    <location>
        <begin position="16"/>
        <end position="80"/>
    </location>
</feature>
<feature type="region of interest" description="Disordered" evidence="2">
    <location>
        <begin position="1"/>
        <end position="24"/>
    </location>
</feature>
<feature type="active site" description="Nucleophile" evidence="1">
    <location>
        <position position="421"/>
    </location>
</feature>
<feature type="binding site" evidence="1">
    <location>
        <position position="93"/>
    </location>
    <ligand>
        <name>[4Fe-4S] cluster</name>
        <dbReference type="ChEBI" id="CHEBI:49883"/>
    </ligand>
</feature>
<feature type="binding site" evidence="1">
    <location>
        <position position="99"/>
    </location>
    <ligand>
        <name>[4Fe-4S] cluster</name>
        <dbReference type="ChEBI" id="CHEBI:49883"/>
    </ligand>
</feature>
<feature type="binding site" evidence="1">
    <location>
        <position position="102"/>
    </location>
    <ligand>
        <name>[4Fe-4S] cluster</name>
        <dbReference type="ChEBI" id="CHEBI:49883"/>
    </ligand>
</feature>
<feature type="binding site" evidence="1">
    <location>
        <position position="181"/>
    </location>
    <ligand>
        <name>[4Fe-4S] cluster</name>
        <dbReference type="ChEBI" id="CHEBI:49883"/>
    </ligand>
</feature>
<feature type="binding site" evidence="1">
    <location>
        <position position="289"/>
    </location>
    <ligand>
        <name>S-adenosyl-L-methionine</name>
        <dbReference type="ChEBI" id="CHEBI:59789"/>
    </ligand>
</feature>
<feature type="binding site" evidence="1">
    <location>
        <position position="318"/>
    </location>
    <ligand>
        <name>S-adenosyl-L-methionine</name>
        <dbReference type="ChEBI" id="CHEBI:59789"/>
    </ligand>
</feature>
<feature type="binding site" evidence="1">
    <location>
        <position position="323"/>
    </location>
    <ligand>
        <name>S-adenosyl-L-methionine</name>
        <dbReference type="ChEBI" id="CHEBI:59789"/>
    </ligand>
</feature>
<feature type="binding site" evidence="1">
    <location>
        <position position="339"/>
    </location>
    <ligand>
        <name>S-adenosyl-L-methionine</name>
        <dbReference type="ChEBI" id="CHEBI:59789"/>
    </ligand>
</feature>
<feature type="binding site" evidence="1">
    <location>
        <position position="367"/>
    </location>
    <ligand>
        <name>S-adenosyl-L-methionine</name>
        <dbReference type="ChEBI" id="CHEBI:59789"/>
    </ligand>
</feature>
<feature type="binding site" evidence="1">
    <location>
        <position position="388"/>
    </location>
    <ligand>
        <name>S-adenosyl-L-methionine</name>
        <dbReference type="ChEBI" id="CHEBI:59789"/>
    </ligand>
</feature>
<comment type="function">
    <text evidence="1">Catalyzes the formation of 5-methyl-uridine at position 1939 (m5U1939) in 23S rRNA.</text>
</comment>
<comment type="catalytic activity">
    <reaction evidence="1">
        <text>uridine(1939) in 23S rRNA + S-adenosyl-L-methionine = 5-methyluridine(1939) in 23S rRNA + S-adenosyl-L-homocysteine + H(+)</text>
        <dbReference type="Rhea" id="RHEA:42908"/>
        <dbReference type="Rhea" id="RHEA-COMP:10278"/>
        <dbReference type="Rhea" id="RHEA-COMP:10279"/>
        <dbReference type="ChEBI" id="CHEBI:15378"/>
        <dbReference type="ChEBI" id="CHEBI:57856"/>
        <dbReference type="ChEBI" id="CHEBI:59789"/>
        <dbReference type="ChEBI" id="CHEBI:65315"/>
        <dbReference type="ChEBI" id="CHEBI:74447"/>
        <dbReference type="EC" id="2.1.1.190"/>
    </reaction>
</comment>
<comment type="similarity">
    <text evidence="1">Belongs to the class I-like SAM-binding methyltransferase superfamily. RNA M5U methyltransferase family. RlmD subfamily.</text>
</comment>
<sequence length="465" mass="51030">MSEAVPLSTRRASSAGDAPGRAPVLDIDSLDMEARGVGRVVDENGEPGKVIFVEGALPGERVTYSSFRRKPTYEQAQVVDILRPSVMRTQPKCAFFGTCGGCSMQHLDMRAQVAIKQRVLEDNLWHLAKLRAEAMFAPIHGPSWGYRYRARLTVRHVAKKGGVLVGFHEKKSSYVADMTSCEVLPPHVSAMLVPLRRLVEQLSIRDRMPQIELAVGARVTALVLRVLEPINAADEALLREFADTHRVQFWLQPKGPDTVAPFYPLDAQLDYTLPEFGIRMPFKPTDFTQVNHQINRVLVGRALRLLAPERGDRVLDLFCGIGNFTLPLARLAREVVGIEGSDALTARALENAKENGVDGHTSFACRNLFEVTADDLRALGAFDKFLVDPPREGALAVSKALAEIAQSGAGPLPARIVYVSCNPSTLARDAGLLVHEAGYRLKGAGVVNMFPHTSHVESIALFERD</sequence>
<evidence type="ECO:0000255" key="1">
    <source>
        <dbReference type="HAMAP-Rule" id="MF_01010"/>
    </source>
</evidence>
<evidence type="ECO:0000256" key="2">
    <source>
        <dbReference type="SAM" id="MobiDB-lite"/>
    </source>
</evidence>
<protein>
    <recommendedName>
        <fullName evidence="1">23S rRNA (uracil(1939)-C(5))-methyltransferase RlmD</fullName>
        <ecNumber evidence="1">2.1.1.190</ecNumber>
    </recommendedName>
    <alternativeName>
        <fullName evidence="1">23S rRNA(m5U1939)-methyltransferase</fullName>
    </alternativeName>
</protein>
<gene>
    <name evidence="1" type="primary">rlmD</name>
    <name type="synonym">rumA</name>
    <name type="ordered locus">BMA1350</name>
</gene>